<sequence>MGQDRGFGFPTQRLCSLSSLALSHLGKQDLNLVSKTCGDTTDMFSTRGSYQVSTQVSQSYFDGYCGWVHGSSHLQQQFLPPQNQCMKQVPLQVDGVISKAEEQCSQKRFLVFDQSGDQTTLLLASDIRKSFETLKQHACPDMKEELQRSNKDLFVCHGMQGNSEPDLKEDSEELNALLYSEDESGYCSEEDEVTSADHSPSIVVSGREDQKTFLGSYGQPLNAKKRKILETSNESMRDAESSCGSCDNTRISFLKRSKLSSNKIGEEKIFETVSLLRSVVPGEELVDPILVIDRAIDYLKSLKMEAKNREA</sequence>
<reference key="1">
    <citation type="submission" date="1999-04" db="EMBL/GenBank/DDBJ databases">
        <title>Structural analysis of Arabidopsis thaliana chromosome 5. XI.</title>
        <authorList>
            <person name="Kaneko T."/>
            <person name="Katoh T."/>
            <person name="Asamizu E."/>
            <person name="Sato S."/>
            <person name="Nakamura Y."/>
            <person name="Kotani H."/>
            <person name="Tabata S."/>
        </authorList>
    </citation>
    <scope>NUCLEOTIDE SEQUENCE [LARGE SCALE GENOMIC DNA]</scope>
    <source>
        <strain>cv. Columbia</strain>
    </source>
</reference>
<reference key="2">
    <citation type="journal article" date="2017" name="Plant J.">
        <title>Araport11: a complete reannotation of the Arabidopsis thaliana reference genome.</title>
        <authorList>
            <person name="Cheng C.Y."/>
            <person name="Krishnakumar V."/>
            <person name="Chan A.P."/>
            <person name="Thibaud-Nissen F."/>
            <person name="Schobel S."/>
            <person name="Town C.D."/>
        </authorList>
    </citation>
    <scope>GENOME REANNOTATION</scope>
    <source>
        <strain>cv. Columbia</strain>
    </source>
</reference>
<reference key="3">
    <citation type="journal article" date="2002" name="Science">
        <title>Functional annotation of a full-length Arabidopsis cDNA collection.</title>
        <authorList>
            <person name="Seki M."/>
            <person name="Narusaka M."/>
            <person name="Kamiya A."/>
            <person name="Ishida J."/>
            <person name="Satou M."/>
            <person name="Sakurai T."/>
            <person name="Nakajima M."/>
            <person name="Enju A."/>
            <person name="Akiyama K."/>
            <person name="Oono Y."/>
            <person name="Muramatsu M."/>
            <person name="Hayashizaki Y."/>
            <person name="Kawai J."/>
            <person name="Carninci P."/>
            <person name="Itoh M."/>
            <person name="Ishii Y."/>
            <person name="Arakawa T."/>
            <person name="Shibata K."/>
            <person name="Shinagawa A."/>
            <person name="Shinozaki K."/>
        </authorList>
    </citation>
    <scope>NUCLEOTIDE SEQUENCE [LARGE SCALE MRNA]</scope>
    <source>
        <strain>cv. Columbia</strain>
    </source>
</reference>
<reference key="4">
    <citation type="journal article" date="2003" name="Science">
        <title>Empirical analysis of transcriptional activity in the Arabidopsis genome.</title>
        <authorList>
            <person name="Yamada K."/>
            <person name="Lim J."/>
            <person name="Dale J.M."/>
            <person name="Chen H."/>
            <person name="Shinn P."/>
            <person name="Palm C.J."/>
            <person name="Southwick A.M."/>
            <person name="Wu H.C."/>
            <person name="Kim C.J."/>
            <person name="Nguyen M."/>
            <person name="Pham P.K."/>
            <person name="Cheuk R.F."/>
            <person name="Karlin-Newmann G."/>
            <person name="Liu S.X."/>
            <person name="Lam B."/>
            <person name="Sakano H."/>
            <person name="Wu T."/>
            <person name="Yu G."/>
            <person name="Miranda M."/>
            <person name="Quach H.L."/>
            <person name="Tripp M."/>
            <person name="Chang C.H."/>
            <person name="Lee J.M."/>
            <person name="Toriumi M.J."/>
            <person name="Chan M.M."/>
            <person name="Tang C.C."/>
            <person name="Onodera C.S."/>
            <person name="Deng J.M."/>
            <person name="Akiyama K."/>
            <person name="Ansari Y."/>
            <person name="Arakawa T."/>
            <person name="Banh J."/>
            <person name="Banno F."/>
            <person name="Bowser L."/>
            <person name="Brooks S.Y."/>
            <person name="Carninci P."/>
            <person name="Chao Q."/>
            <person name="Choy N."/>
            <person name="Enju A."/>
            <person name="Goldsmith A.D."/>
            <person name="Gurjal M."/>
            <person name="Hansen N.F."/>
            <person name="Hayashizaki Y."/>
            <person name="Johnson-Hopson C."/>
            <person name="Hsuan V.W."/>
            <person name="Iida K."/>
            <person name="Karnes M."/>
            <person name="Khan S."/>
            <person name="Koesema E."/>
            <person name="Ishida J."/>
            <person name="Jiang P.X."/>
            <person name="Jones T."/>
            <person name="Kawai J."/>
            <person name="Kamiya A."/>
            <person name="Meyers C."/>
            <person name="Nakajima M."/>
            <person name="Narusaka M."/>
            <person name="Seki M."/>
            <person name="Sakurai T."/>
            <person name="Satou M."/>
            <person name="Tamse R."/>
            <person name="Vaysberg M."/>
            <person name="Wallender E.K."/>
            <person name="Wong C."/>
            <person name="Yamamura Y."/>
            <person name="Yuan S."/>
            <person name="Shinozaki K."/>
            <person name="Davis R.W."/>
            <person name="Theologis A."/>
            <person name="Ecker J.R."/>
        </authorList>
    </citation>
    <scope>NUCLEOTIDE SEQUENCE [LARGE SCALE MRNA]</scope>
    <source>
        <strain>cv. Columbia</strain>
    </source>
</reference>
<reference key="5">
    <citation type="journal article" date="2003" name="Plant Cell">
        <title>The Arabidopsis basic/helix-loop-helix transcription factor family.</title>
        <authorList>
            <person name="Toledo-Ortiz G."/>
            <person name="Huq E."/>
            <person name="Quail P.H."/>
        </authorList>
    </citation>
    <scope>GENE FAMILY</scope>
    <scope>NOMENCLATURE</scope>
</reference>
<reference key="6">
    <citation type="journal article" date="2003" name="Plant Cell">
        <title>Update on the basic helix-loop-helix transcription factor gene family in Arabidopsis thaliana.</title>
        <authorList>
            <person name="Bailey P.C."/>
            <person name="Martin C."/>
            <person name="Toledo-Ortiz G."/>
            <person name="Quail P.H."/>
            <person name="Huq E."/>
            <person name="Heim M.A."/>
            <person name="Jakoby M."/>
            <person name="Werber M."/>
            <person name="Weisshaar B."/>
        </authorList>
    </citation>
    <scope>GENE FAMILY</scope>
    <scope>NOMENCLATURE</scope>
</reference>
<keyword id="KW-0238">DNA-binding</keyword>
<keyword id="KW-0539">Nucleus</keyword>
<keyword id="KW-1185">Reference proteome</keyword>
<keyword id="KW-0804">Transcription</keyword>
<keyword id="KW-0805">Transcription regulation</keyword>
<accession>Q9FGB0</accession>
<gene>
    <name type="primary">BHLH145</name>
    <name type="synonym">EN131</name>
    <name type="ordered locus">At5g50010</name>
    <name type="ORF">MPF21.2</name>
</gene>
<evidence type="ECO:0000255" key="1">
    <source>
        <dbReference type="PROSITE-ProRule" id="PRU00981"/>
    </source>
</evidence>
<evidence type="ECO:0000305" key="2"/>
<proteinExistence type="evidence at protein level"/>
<dbReference type="EMBL" id="AB026650">
    <property type="protein sequence ID" value="BAB10287.1"/>
    <property type="molecule type" value="Genomic_DNA"/>
</dbReference>
<dbReference type="EMBL" id="CP002688">
    <property type="protein sequence ID" value="AED95883.1"/>
    <property type="molecule type" value="Genomic_DNA"/>
</dbReference>
<dbReference type="EMBL" id="AK117155">
    <property type="protein sequence ID" value="BAC41833.1"/>
    <property type="molecule type" value="mRNA"/>
</dbReference>
<dbReference type="EMBL" id="BT005301">
    <property type="protein sequence ID" value="AAO63365.1"/>
    <property type="molecule type" value="mRNA"/>
</dbReference>
<dbReference type="RefSeq" id="NP_199812.1">
    <property type="nucleotide sequence ID" value="NM_124380.3"/>
</dbReference>
<dbReference type="SMR" id="Q9FGB0"/>
<dbReference type="BioGRID" id="20311">
    <property type="interactions" value="16"/>
</dbReference>
<dbReference type="IntAct" id="Q9FGB0">
    <property type="interactions" value="16"/>
</dbReference>
<dbReference type="STRING" id="3702.Q9FGB0"/>
<dbReference type="PaxDb" id="3702-AT5G50010.1"/>
<dbReference type="EnsemblPlants" id="AT5G50010.1">
    <property type="protein sequence ID" value="AT5G50010.1"/>
    <property type="gene ID" value="AT5G50010"/>
</dbReference>
<dbReference type="GeneID" id="835065"/>
<dbReference type="Gramene" id="AT5G50010.1">
    <property type="protein sequence ID" value="AT5G50010.1"/>
    <property type="gene ID" value="AT5G50010"/>
</dbReference>
<dbReference type="KEGG" id="ath:AT5G50010"/>
<dbReference type="Araport" id="AT5G50010"/>
<dbReference type="TAIR" id="AT5G50010">
    <property type="gene designation" value="SACL2"/>
</dbReference>
<dbReference type="eggNOG" id="ENOG502R77Z">
    <property type="taxonomic scope" value="Eukaryota"/>
</dbReference>
<dbReference type="HOGENOM" id="CLU_895306_0_0_1"/>
<dbReference type="InParanoid" id="Q9FGB0"/>
<dbReference type="OMA" id="CPDMKEE"/>
<dbReference type="PhylomeDB" id="Q9FGB0"/>
<dbReference type="PRO" id="PR:Q9FGB0"/>
<dbReference type="Proteomes" id="UP000006548">
    <property type="component" value="Chromosome 5"/>
</dbReference>
<dbReference type="ExpressionAtlas" id="Q9FGB0">
    <property type="expression patterns" value="baseline and differential"/>
</dbReference>
<dbReference type="GO" id="GO:0005634">
    <property type="term" value="C:nucleus"/>
    <property type="evidence" value="ECO:0007669"/>
    <property type="project" value="UniProtKB-SubCell"/>
</dbReference>
<dbReference type="GO" id="GO:0003677">
    <property type="term" value="F:DNA binding"/>
    <property type="evidence" value="ECO:0007669"/>
    <property type="project" value="UniProtKB-KW"/>
</dbReference>
<dbReference type="GO" id="GO:0003700">
    <property type="term" value="F:DNA-binding transcription factor activity"/>
    <property type="evidence" value="ECO:0000250"/>
    <property type="project" value="TAIR"/>
</dbReference>
<dbReference type="GO" id="GO:0046983">
    <property type="term" value="F:protein dimerization activity"/>
    <property type="evidence" value="ECO:0007669"/>
    <property type="project" value="InterPro"/>
</dbReference>
<dbReference type="GO" id="GO:0006355">
    <property type="term" value="P:regulation of DNA-templated transcription"/>
    <property type="evidence" value="ECO:0000304"/>
    <property type="project" value="TAIR"/>
</dbReference>
<dbReference type="CDD" id="cd18917">
    <property type="entry name" value="bHLH_AtSAC51_like"/>
    <property type="match status" value="1"/>
</dbReference>
<dbReference type="InterPro" id="IPR011598">
    <property type="entry name" value="bHLH_dom"/>
</dbReference>
<dbReference type="InterPro" id="IPR037546">
    <property type="entry name" value="SAC51-like"/>
</dbReference>
<dbReference type="PANTHER" id="PTHR36066">
    <property type="entry name" value="TRANSCRIPTION FACTOR BHLH145"/>
    <property type="match status" value="1"/>
</dbReference>
<dbReference type="PANTHER" id="PTHR36066:SF2">
    <property type="entry name" value="TRANSCRIPTION FACTOR BHLH145"/>
    <property type="match status" value="1"/>
</dbReference>
<dbReference type="Pfam" id="PF23173">
    <property type="entry name" value="bHLH_SAC51"/>
    <property type="match status" value="1"/>
</dbReference>
<dbReference type="PROSITE" id="PS50888">
    <property type="entry name" value="BHLH"/>
    <property type="match status" value="1"/>
</dbReference>
<organism>
    <name type="scientific">Arabidopsis thaliana</name>
    <name type="common">Mouse-ear cress</name>
    <dbReference type="NCBI Taxonomy" id="3702"/>
    <lineage>
        <taxon>Eukaryota</taxon>
        <taxon>Viridiplantae</taxon>
        <taxon>Streptophyta</taxon>
        <taxon>Embryophyta</taxon>
        <taxon>Tracheophyta</taxon>
        <taxon>Spermatophyta</taxon>
        <taxon>Magnoliopsida</taxon>
        <taxon>eudicotyledons</taxon>
        <taxon>Gunneridae</taxon>
        <taxon>Pentapetalae</taxon>
        <taxon>rosids</taxon>
        <taxon>malvids</taxon>
        <taxon>Brassicales</taxon>
        <taxon>Brassicaceae</taxon>
        <taxon>Camelineae</taxon>
        <taxon>Arabidopsis</taxon>
    </lineage>
</organism>
<feature type="chain" id="PRO_0000358823" description="Transcription factor bHLH145">
    <location>
        <begin position="1"/>
        <end position="311"/>
    </location>
</feature>
<feature type="domain" description="bHLH" evidence="1">
    <location>
        <begin position="253"/>
        <end position="302"/>
    </location>
</feature>
<protein>
    <recommendedName>
        <fullName>Transcription factor bHLH145</fullName>
    </recommendedName>
    <alternativeName>
        <fullName>Basic helix-loop-helix protein 145</fullName>
        <shortName>AtbHLH145</shortName>
        <shortName>bHLH 145</shortName>
    </alternativeName>
    <alternativeName>
        <fullName>Transcription factor EN 131</fullName>
    </alternativeName>
    <alternativeName>
        <fullName>bHLH transcription factor bHLH145</fullName>
    </alternativeName>
</protein>
<comment type="subunit">
    <text evidence="2">Homodimer.</text>
</comment>
<comment type="interaction">
    <interactant intactId="EBI-4477059">
        <id>Q9FGB0</id>
    </interactant>
    <interactant intactId="EBI-15195383">
        <id>Q9ASX9</id>
        <label>BHLH144</label>
    </interactant>
    <organismsDiffer>false</organismsDiffer>
    <experiments>3</experiments>
</comment>
<comment type="interaction">
    <interactant intactId="EBI-4477059">
        <id>Q9FGB0</id>
    </interactant>
    <interactant intactId="EBI-15197899">
        <id>Q58G01</id>
        <label>BHLH155</label>
    </interactant>
    <organismsDiffer>false</organismsDiffer>
    <experiments>3</experiments>
</comment>
<comment type="subcellular location">
    <subcellularLocation>
        <location evidence="1">Nucleus</location>
    </subcellularLocation>
</comment>
<name>BH145_ARATH</name>